<evidence type="ECO:0000250" key="1"/>
<evidence type="ECO:0000255" key="2"/>
<evidence type="ECO:0000305" key="3"/>
<reference key="1">
    <citation type="journal article" date="2005" name="Genome Biol.">
        <title>Full-length cDNAs from chicken bursal lymphocytes to facilitate gene function analysis.</title>
        <authorList>
            <person name="Caldwell R.B."/>
            <person name="Kierzek A.M."/>
            <person name="Arakawa H."/>
            <person name="Bezzubov Y."/>
            <person name="Zaim J."/>
            <person name="Fiedler P."/>
            <person name="Kutter S."/>
            <person name="Blagodatski A."/>
            <person name="Kostovska D."/>
            <person name="Koter M."/>
            <person name="Plachy J."/>
            <person name="Carninci P."/>
            <person name="Hayashizaki Y."/>
            <person name="Buerstedde J.-M."/>
        </authorList>
    </citation>
    <scope>NUCLEOTIDE SEQUENCE [LARGE SCALE MRNA]</scope>
    <source>
        <strain>CB</strain>
        <tissue>Bursa of Fabricius</tissue>
    </source>
</reference>
<feature type="chain" id="PRO_0000234393" description="Protein orai-2">
    <location>
        <begin position="1"/>
        <end position="257"/>
    </location>
</feature>
<feature type="transmembrane region" description="Helical" evidence="2">
    <location>
        <begin position="67"/>
        <end position="84"/>
    </location>
</feature>
<feature type="transmembrane region" description="Helical" evidence="2">
    <location>
        <begin position="95"/>
        <end position="115"/>
    </location>
</feature>
<feature type="transmembrane region" description="Helical" evidence="2">
    <location>
        <begin position="149"/>
        <end position="169"/>
    </location>
</feature>
<feature type="transmembrane region" description="Helical" evidence="2">
    <location>
        <begin position="199"/>
        <end position="219"/>
    </location>
</feature>
<accession>Q5ZLW2</accession>
<gene>
    <name type="primary">ORAI2</name>
    <name type="synonym">TMEM142B</name>
    <name type="ORF">RCJMB04_4k12</name>
</gene>
<organism>
    <name type="scientific">Gallus gallus</name>
    <name type="common">Chicken</name>
    <dbReference type="NCBI Taxonomy" id="9031"/>
    <lineage>
        <taxon>Eukaryota</taxon>
        <taxon>Metazoa</taxon>
        <taxon>Chordata</taxon>
        <taxon>Craniata</taxon>
        <taxon>Vertebrata</taxon>
        <taxon>Euteleostomi</taxon>
        <taxon>Archelosauria</taxon>
        <taxon>Archosauria</taxon>
        <taxon>Dinosauria</taxon>
        <taxon>Saurischia</taxon>
        <taxon>Theropoda</taxon>
        <taxon>Coelurosauria</taxon>
        <taxon>Aves</taxon>
        <taxon>Neognathae</taxon>
        <taxon>Galloanserae</taxon>
        <taxon>Galliformes</taxon>
        <taxon>Phasianidae</taxon>
        <taxon>Phasianinae</taxon>
        <taxon>Gallus</taxon>
    </lineage>
</organism>
<dbReference type="EMBL" id="AJ719622">
    <property type="protein sequence ID" value="CAG31281.1"/>
    <property type="molecule type" value="mRNA"/>
</dbReference>
<dbReference type="RefSeq" id="NP_001025881.3">
    <property type="nucleotide sequence ID" value="NM_001030710.3"/>
</dbReference>
<dbReference type="SMR" id="Q5ZLW2"/>
<dbReference type="FunCoup" id="Q5ZLW2">
    <property type="interactions" value="522"/>
</dbReference>
<dbReference type="STRING" id="9031.ENSGALP00000054153"/>
<dbReference type="GlyGen" id="Q5ZLW2">
    <property type="glycosylation" value="1 site"/>
</dbReference>
<dbReference type="PaxDb" id="9031-ENSGALP00000002837"/>
<dbReference type="GeneID" id="417509"/>
<dbReference type="KEGG" id="gga:417509"/>
<dbReference type="CTD" id="80228"/>
<dbReference type="VEuPathDB" id="HostDB:geneid_417509"/>
<dbReference type="eggNOG" id="KOG4298">
    <property type="taxonomic scope" value="Eukaryota"/>
</dbReference>
<dbReference type="HOGENOM" id="CLU_062509_1_1_1"/>
<dbReference type="InParanoid" id="Q5ZLW2"/>
<dbReference type="OrthoDB" id="61124at2759"/>
<dbReference type="PhylomeDB" id="Q5ZLW2"/>
<dbReference type="TreeFam" id="TF313576"/>
<dbReference type="PRO" id="PR:Q5ZLW2"/>
<dbReference type="Proteomes" id="UP000000539">
    <property type="component" value="Chromosome 19"/>
</dbReference>
<dbReference type="Bgee" id="ENSGALG00000001837">
    <property type="expression patterns" value="Expressed in testis and 12 other cell types or tissues"/>
</dbReference>
<dbReference type="GO" id="GO:0016020">
    <property type="term" value="C:membrane"/>
    <property type="evidence" value="ECO:0000318"/>
    <property type="project" value="GO_Central"/>
</dbReference>
<dbReference type="GO" id="GO:0015279">
    <property type="term" value="F:store-operated calcium channel activity"/>
    <property type="evidence" value="ECO:0000318"/>
    <property type="project" value="GO_Central"/>
</dbReference>
<dbReference type="GO" id="GO:0002115">
    <property type="term" value="P:store-operated calcium entry"/>
    <property type="evidence" value="ECO:0000318"/>
    <property type="project" value="GO_Central"/>
</dbReference>
<dbReference type="FunFam" id="1.20.140.140:FF:000001">
    <property type="entry name" value="Calcium release-activated calcium modulator 1"/>
    <property type="match status" value="1"/>
</dbReference>
<dbReference type="Gene3D" id="1.20.140.140">
    <property type="entry name" value="Calcium release-activated calcium channel protein Orai"/>
    <property type="match status" value="1"/>
</dbReference>
<dbReference type="InterPro" id="IPR012446">
    <property type="entry name" value="CRAC_channel"/>
</dbReference>
<dbReference type="InterPro" id="IPR038350">
    <property type="entry name" value="Orai_sf"/>
</dbReference>
<dbReference type="PANTHER" id="PTHR31501">
    <property type="entry name" value="CALCIUM RELEASE-ACTIVATED CALCIUM CHANNEL PROTEIN 1"/>
    <property type="match status" value="1"/>
</dbReference>
<dbReference type="PANTHER" id="PTHR31501:SF5">
    <property type="entry name" value="PROTEIN ORAI-2"/>
    <property type="match status" value="1"/>
</dbReference>
<dbReference type="Pfam" id="PF07856">
    <property type="entry name" value="Orai-1"/>
    <property type="match status" value="1"/>
</dbReference>
<name>ORAI2_CHICK</name>
<keyword id="KW-0472">Membrane</keyword>
<keyword id="KW-1185">Reference proteome</keyword>
<keyword id="KW-0812">Transmembrane</keyword>
<keyword id="KW-1133">Transmembrane helix</keyword>
<comment type="function">
    <text evidence="1">Ca(2+) release-activated Ca(2+)-like (CRAC-like) channel subunit which mediates Ca(2+) influx and increase in Ca(2+)-selective current by synergy with the Ca(2+) sensor, STIM1.</text>
</comment>
<comment type="subcellular location">
    <subcellularLocation>
        <location evidence="1">Membrane</location>
        <topology evidence="1">Multi-pass membrane protein</topology>
    </subcellularLocation>
</comment>
<comment type="similarity">
    <text evidence="3">Belongs to the Orai family.</text>
</comment>
<sequence length="257" mass="28955">MSSELNVPVDPSTPACCSEPGTKGMDYRDWVRRSYLELVTSNHHSVQALSWRKLYLSRAKLKASSRTSALLSGFAMVAMVEVQLEMQYKYPQMLLIAFSACTTVLVAVHLFALLISTCILPNVEAVSNIHNLNSISESPHERMHPYIELAWGFSTVLGILLFLAEVVLLCWIKFLPVDSILKNDTTTIQKPSGHAGWQAALVSTIIMVPVGLIFVVFTIHFYRSLVRHKTERHNREIEELHKLKVQLDGHDRGMQVV</sequence>
<proteinExistence type="evidence at transcript level"/>
<protein>
    <recommendedName>
        <fullName>Protein orai-2</fullName>
    </recommendedName>
    <alternativeName>
        <fullName>Transmembrane protein 142B</fullName>
    </alternativeName>
</protein>